<proteinExistence type="inferred from homology"/>
<sequence>MRYLTAGESHGPQLTTIIEGVPAGLYIEQDDINYELARRQKGHGRGRRMQIEKDQAKVLSGVRHGKTLGSPIALVVENNDWKHWTKVMGAEPITEEEESEMKRQISRPRPGHADLNGAIKYGHRDMRNVLERSSARETTVRVAAGAVAKQILAHLGIKVAGHVLEIGGVKAAHTAYESIEDLQKVTEESPVRCYDSEAGQKMMDAIDEAKKNGDSIGGIVEVIVEGMPVGVGSYVHYDRKLDSKLAGAVLSINAFKGVEFGIGFEAASKNGSEVHDEIIWDEEKGYTRKTNRLGGLEGGMSTGMPIVVRGVMKPIPTLYKPLQSVDIETKEPFSASIERSDSCAVPAASVVAEAVVAWEIANAVVEQFGLDQIDRIKENVEKMRQLQREF</sequence>
<reference key="1">
    <citation type="journal article" date="2007" name="PLoS ONE">
        <title>Paradoxical DNA repair and peroxide resistance gene conservation in Bacillus pumilus SAFR-032.</title>
        <authorList>
            <person name="Gioia J."/>
            <person name="Yerrapragada S."/>
            <person name="Qin X."/>
            <person name="Jiang H."/>
            <person name="Igboeli O.C."/>
            <person name="Muzny D."/>
            <person name="Dugan-Rocha S."/>
            <person name="Ding Y."/>
            <person name="Hawes A."/>
            <person name="Liu W."/>
            <person name="Perez L."/>
            <person name="Kovar C."/>
            <person name="Dinh H."/>
            <person name="Lee S."/>
            <person name="Nazareth L."/>
            <person name="Blyth P."/>
            <person name="Holder M."/>
            <person name="Buhay C."/>
            <person name="Tirumalai M.R."/>
            <person name="Liu Y."/>
            <person name="Dasgupta I."/>
            <person name="Bokhetache L."/>
            <person name="Fujita M."/>
            <person name="Karouia F."/>
            <person name="Eswara Moorthy P."/>
            <person name="Siefert J."/>
            <person name="Uzman A."/>
            <person name="Buzumbo P."/>
            <person name="Verma A."/>
            <person name="Zwiya H."/>
            <person name="McWilliams B.D."/>
            <person name="Olowu A."/>
            <person name="Clinkenbeard K.D."/>
            <person name="Newcombe D."/>
            <person name="Golebiewski L."/>
            <person name="Petrosino J.F."/>
            <person name="Nicholson W.L."/>
            <person name="Fox G.E."/>
            <person name="Venkateswaran K."/>
            <person name="Highlander S.K."/>
            <person name="Weinstock G.M."/>
        </authorList>
    </citation>
    <scope>NUCLEOTIDE SEQUENCE [LARGE SCALE GENOMIC DNA]</scope>
    <source>
        <strain>SAFR-032</strain>
    </source>
</reference>
<accession>A8FEK5</accession>
<organism>
    <name type="scientific">Bacillus pumilus (strain SAFR-032)</name>
    <dbReference type="NCBI Taxonomy" id="315750"/>
    <lineage>
        <taxon>Bacteria</taxon>
        <taxon>Bacillati</taxon>
        <taxon>Bacillota</taxon>
        <taxon>Bacilli</taxon>
        <taxon>Bacillales</taxon>
        <taxon>Bacillaceae</taxon>
        <taxon>Bacillus</taxon>
    </lineage>
</organism>
<evidence type="ECO:0000255" key="1">
    <source>
        <dbReference type="HAMAP-Rule" id="MF_00300"/>
    </source>
</evidence>
<name>AROC_BACP2</name>
<feature type="chain" id="PRO_1000059309" description="Chorismate synthase">
    <location>
        <begin position="1"/>
        <end position="390"/>
    </location>
</feature>
<feature type="binding site" evidence="1">
    <location>
        <position position="39"/>
    </location>
    <ligand>
        <name>NADP(+)</name>
        <dbReference type="ChEBI" id="CHEBI:58349"/>
    </ligand>
</feature>
<feature type="binding site" evidence="1">
    <location>
        <position position="45"/>
    </location>
    <ligand>
        <name>NADP(+)</name>
        <dbReference type="ChEBI" id="CHEBI:58349"/>
    </ligand>
</feature>
<feature type="binding site" evidence="1">
    <location>
        <begin position="132"/>
        <end position="134"/>
    </location>
    <ligand>
        <name>FMN</name>
        <dbReference type="ChEBI" id="CHEBI:58210"/>
    </ligand>
</feature>
<feature type="binding site" evidence="1">
    <location>
        <begin position="253"/>
        <end position="254"/>
    </location>
    <ligand>
        <name>FMN</name>
        <dbReference type="ChEBI" id="CHEBI:58210"/>
    </ligand>
</feature>
<feature type="binding site" evidence="1">
    <location>
        <position position="298"/>
    </location>
    <ligand>
        <name>FMN</name>
        <dbReference type="ChEBI" id="CHEBI:58210"/>
    </ligand>
</feature>
<feature type="binding site" evidence="1">
    <location>
        <begin position="313"/>
        <end position="317"/>
    </location>
    <ligand>
        <name>FMN</name>
        <dbReference type="ChEBI" id="CHEBI:58210"/>
    </ligand>
</feature>
<feature type="binding site" evidence="1">
    <location>
        <position position="339"/>
    </location>
    <ligand>
        <name>FMN</name>
        <dbReference type="ChEBI" id="CHEBI:58210"/>
    </ligand>
</feature>
<gene>
    <name evidence="1" type="primary">aroC</name>
    <name type="ordered locus">BPUM_2002</name>
</gene>
<keyword id="KW-0028">Amino-acid biosynthesis</keyword>
<keyword id="KW-0057">Aromatic amino acid biosynthesis</keyword>
<keyword id="KW-0274">FAD</keyword>
<keyword id="KW-0285">Flavoprotein</keyword>
<keyword id="KW-0288">FMN</keyword>
<keyword id="KW-0456">Lyase</keyword>
<keyword id="KW-0521">NADP</keyword>
<comment type="function">
    <text evidence="1">Catalyzes the anti-1,4-elimination of the C-3 phosphate and the C-6 proR hydrogen from 5-enolpyruvylshikimate-3-phosphate (EPSP) to yield chorismate, which is the branch point compound that serves as the starting substrate for the three terminal pathways of aromatic amino acid biosynthesis. This reaction introduces a second double bond into the aromatic ring system.</text>
</comment>
<comment type="catalytic activity">
    <reaction evidence="1">
        <text>5-O-(1-carboxyvinyl)-3-phosphoshikimate = chorismate + phosphate</text>
        <dbReference type="Rhea" id="RHEA:21020"/>
        <dbReference type="ChEBI" id="CHEBI:29748"/>
        <dbReference type="ChEBI" id="CHEBI:43474"/>
        <dbReference type="ChEBI" id="CHEBI:57701"/>
        <dbReference type="EC" id="4.2.3.5"/>
    </reaction>
</comment>
<comment type="cofactor">
    <cofactor evidence="1">
        <name>FMNH2</name>
        <dbReference type="ChEBI" id="CHEBI:57618"/>
    </cofactor>
    <text evidence="1">Reduced FMN (FMNH(2)).</text>
</comment>
<comment type="pathway">
    <text evidence="1">Metabolic intermediate biosynthesis; chorismate biosynthesis; chorismate from D-erythrose 4-phosphate and phosphoenolpyruvate: step 7/7.</text>
</comment>
<comment type="subunit">
    <text evidence="1">Homotetramer.</text>
</comment>
<comment type="similarity">
    <text evidence="1">Belongs to the chorismate synthase family.</text>
</comment>
<protein>
    <recommendedName>
        <fullName evidence="1">Chorismate synthase</fullName>
        <shortName evidence="1">CS</shortName>
        <ecNumber evidence="1">4.2.3.5</ecNumber>
    </recommendedName>
    <alternativeName>
        <fullName evidence="1">5-enolpyruvylshikimate-3-phosphate phospholyase</fullName>
    </alternativeName>
</protein>
<dbReference type="EC" id="4.2.3.5" evidence="1"/>
<dbReference type="EMBL" id="CP000813">
    <property type="protein sequence ID" value="ABV62672.1"/>
    <property type="molecule type" value="Genomic_DNA"/>
</dbReference>
<dbReference type="RefSeq" id="WP_012010383.1">
    <property type="nucleotide sequence ID" value="NZ_VEIS01000015.1"/>
</dbReference>
<dbReference type="SMR" id="A8FEK5"/>
<dbReference type="STRING" id="315750.BPUM_2002"/>
<dbReference type="GeneID" id="5621268"/>
<dbReference type="KEGG" id="bpu:BPUM_2002"/>
<dbReference type="eggNOG" id="COG0082">
    <property type="taxonomic scope" value="Bacteria"/>
</dbReference>
<dbReference type="HOGENOM" id="CLU_034547_2_0_9"/>
<dbReference type="OrthoDB" id="9771806at2"/>
<dbReference type="UniPathway" id="UPA00053">
    <property type="reaction ID" value="UER00090"/>
</dbReference>
<dbReference type="Proteomes" id="UP000001355">
    <property type="component" value="Chromosome"/>
</dbReference>
<dbReference type="GO" id="GO:0005829">
    <property type="term" value="C:cytosol"/>
    <property type="evidence" value="ECO:0007669"/>
    <property type="project" value="TreeGrafter"/>
</dbReference>
<dbReference type="GO" id="GO:0004107">
    <property type="term" value="F:chorismate synthase activity"/>
    <property type="evidence" value="ECO:0007669"/>
    <property type="project" value="UniProtKB-UniRule"/>
</dbReference>
<dbReference type="GO" id="GO:0010181">
    <property type="term" value="F:FMN binding"/>
    <property type="evidence" value="ECO:0007669"/>
    <property type="project" value="TreeGrafter"/>
</dbReference>
<dbReference type="GO" id="GO:0008652">
    <property type="term" value="P:amino acid biosynthetic process"/>
    <property type="evidence" value="ECO:0007669"/>
    <property type="project" value="UniProtKB-KW"/>
</dbReference>
<dbReference type="GO" id="GO:0009073">
    <property type="term" value="P:aromatic amino acid family biosynthetic process"/>
    <property type="evidence" value="ECO:0007669"/>
    <property type="project" value="UniProtKB-KW"/>
</dbReference>
<dbReference type="GO" id="GO:0009423">
    <property type="term" value="P:chorismate biosynthetic process"/>
    <property type="evidence" value="ECO:0007669"/>
    <property type="project" value="UniProtKB-UniRule"/>
</dbReference>
<dbReference type="CDD" id="cd07304">
    <property type="entry name" value="Chorismate_synthase"/>
    <property type="match status" value="1"/>
</dbReference>
<dbReference type="FunFam" id="3.60.150.10:FF:000002">
    <property type="entry name" value="Chorismate synthase"/>
    <property type="match status" value="1"/>
</dbReference>
<dbReference type="Gene3D" id="3.60.150.10">
    <property type="entry name" value="Chorismate synthase AroC"/>
    <property type="match status" value="1"/>
</dbReference>
<dbReference type="HAMAP" id="MF_00300">
    <property type="entry name" value="Chorismate_synth"/>
    <property type="match status" value="1"/>
</dbReference>
<dbReference type="InterPro" id="IPR000453">
    <property type="entry name" value="Chorismate_synth"/>
</dbReference>
<dbReference type="InterPro" id="IPR035904">
    <property type="entry name" value="Chorismate_synth_AroC_sf"/>
</dbReference>
<dbReference type="InterPro" id="IPR020541">
    <property type="entry name" value="Chorismate_synthase_CS"/>
</dbReference>
<dbReference type="NCBIfam" id="TIGR00033">
    <property type="entry name" value="aroC"/>
    <property type="match status" value="1"/>
</dbReference>
<dbReference type="NCBIfam" id="NF003793">
    <property type="entry name" value="PRK05382.1"/>
    <property type="match status" value="1"/>
</dbReference>
<dbReference type="PANTHER" id="PTHR21085">
    <property type="entry name" value="CHORISMATE SYNTHASE"/>
    <property type="match status" value="1"/>
</dbReference>
<dbReference type="PANTHER" id="PTHR21085:SF0">
    <property type="entry name" value="CHORISMATE SYNTHASE"/>
    <property type="match status" value="1"/>
</dbReference>
<dbReference type="Pfam" id="PF01264">
    <property type="entry name" value="Chorismate_synt"/>
    <property type="match status" value="1"/>
</dbReference>
<dbReference type="PIRSF" id="PIRSF001456">
    <property type="entry name" value="Chorismate_synth"/>
    <property type="match status" value="1"/>
</dbReference>
<dbReference type="SUPFAM" id="SSF103263">
    <property type="entry name" value="Chorismate synthase, AroC"/>
    <property type="match status" value="1"/>
</dbReference>
<dbReference type="PROSITE" id="PS00787">
    <property type="entry name" value="CHORISMATE_SYNTHASE_1"/>
    <property type="match status" value="1"/>
</dbReference>
<dbReference type="PROSITE" id="PS00788">
    <property type="entry name" value="CHORISMATE_SYNTHASE_2"/>
    <property type="match status" value="1"/>
</dbReference>
<dbReference type="PROSITE" id="PS00789">
    <property type="entry name" value="CHORISMATE_SYNTHASE_3"/>
    <property type="match status" value="1"/>
</dbReference>